<protein>
    <recommendedName>
        <fullName evidence="1">Putrescine aminotransferase</fullName>
        <shortName evidence="1">PAT</shortName>
        <shortName evidence="1">PATase</shortName>
        <ecNumber evidence="1">2.6.1.82</ecNumber>
    </recommendedName>
    <alternativeName>
        <fullName evidence="1">Cadaverine transaminase</fullName>
    </alternativeName>
    <alternativeName>
        <fullName evidence="1">Diamine transaminase</fullName>
        <ecNumber evidence="1">2.6.1.29</ecNumber>
    </alternativeName>
    <alternativeName>
        <fullName evidence="1">Putrescine transaminase</fullName>
    </alternativeName>
    <alternativeName>
        <fullName evidence="1">Putrescine--2-oxoglutaric acid transaminase</fullName>
    </alternativeName>
</protein>
<keyword id="KW-0032">Aminotransferase</keyword>
<keyword id="KW-0663">Pyridoxal phosphate</keyword>
<keyword id="KW-1185">Reference proteome</keyword>
<keyword id="KW-0808">Transferase</keyword>
<gene>
    <name evidence="1" type="primary">patA</name>
    <name type="ordered locus">ECA1543</name>
</gene>
<sequence>MSRSNAHLNPLECTQQALHWIHSDTLSPDDMAALNQEVLSCFREYVNPGFLEYRKSVTTGGDYGAVEWRASGPNTLIDTQGNEYLDCLGGYGIFNVGHRNPNVIAAVESQLARQPLHSQELLDPLRGLLAKTLAALTPGNLKYSFFSNSGTESVEAALKLAKAYQSPRGKYTFIAATGAFHGKSLGALSATAKPAFRRPFMPLLPGFHHVAFGDISAMRKQVQQCQKTGDDVAAIILEPIQGEGGVIVPPENYLPAVRALCDEVGALLILDEVQTGMGRTGKMFACEHYGVQPDILCLAKALGGGVMPIGATVATEAVFSVLFENPFLHTTTFGGNPLACAAALATVNELLTKNLPEQAAIQGEFLLQGLQQLAAEYPQLIIEARGMGLLQAIEFRKNEIGYAFAKELFQRNILVAGTLNNSKSVRIEPPLTITREQCARVLKEAKDVLKKLNGTMPDENKMKEYAVE</sequence>
<proteinExistence type="inferred from homology"/>
<dbReference type="EC" id="2.6.1.82" evidence="1"/>
<dbReference type="EC" id="2.6.1.29" evidence="1"/>
<dbReference type="EMBL" id="BX950851">
    <property type="protein sequence ID" value="CAG74449.1"/>
    <property type="molecule type" value="Genomic_DNA"/>
</dbReference>
<dbReference type="SMR" id="Q6D6Y6"/>
<dbReference type="STRING" id="218491.ECA1543"/>
<dbReference type="KEGG" id="eca:ECA1543"/>
<dbReference type="eggNOG" id="COG4992">
    <property type="taxonomic scope" value="Bacteria"/>
</dbReference>
<dbReference type="HOGENOM" id="CLU_016922_10_0_6"/>
<dbReference type="UniPathway" id="UPA00188">
    <property type="reaction ID" value="UER00290"/>
</dbReference>
<dbReference type="Proteomes" id="UP000007966">
    <property type="component" value="Chromosome"/>
</dbReference>
<dbReference type="GO" id="GO:0019161">
    <property type="term" value="F:diamine transaminase activity"/>
    <property type="evidence" value="ECO:0007669"/>
    <property type="project" value="UniProtKB-EC"/>
</dbReference>
<dbReference type="GO" id="GO:0042802">
    <property type="term" value="F:identical protein binding"/>
    <property type="evidence" value="ECO:0007669"/>
    <property type="project" value="TreeGrafter"/>
</dbReference>
<dbReference type="GO" id="GO:0033094">
    <property type="term" value="F:putrescine--2-oxoglutarate transaminase activity"/>
    <property type="evidence" value="ECO:0007669"/>
    <property type="project" value="UniProtKB-UniRule"/>
</dbReference>
<dbReference type="GO" id="GO:0030170">
    <property type="term" value="F:pyridoxal phosphate binding"/>
    <property type="evidence" value="ECO:0007669"/>
    <property type="project" value="UniProtKB-UniRule"/>
</dbReference>
<dbReference type="GO" id="GO:0019477">
    <property type="term" value="P:L-lysine catabolic process"/>
    <property type="evidence" value="ECO:0007669"/>
    <property type="project" value="UniProtKB-UniRule"/>
</dbReference>
<dbReference type="GO" id="GO:0009447">
    <property type="term" value="P:putrescine catabolic process"/>
    <property type="evidence" value="ECO:0007669"/>
    <property type="project" value="UniProtKB-UniRule"/>
</dbReference>
<dbReference type="CDD" id="cd00610">
    <property type="entry name" value="OAT_like"/>
    <property type="match status" value="1"/>
</dbReference>
<dbReference type="FunFam" id="3.40.640.10:FF:000004">
    <property type="entry name" value="Acetylornithine aminotransferase"/>
    <property type="match status" value="1"/>
</dbReference>
<dbReference type="Gene3D" id="3.90.1150.10">
    <property type="entry name" value="Aspartate Aminotransferase, domain 1"/>
    <property type="match status" value="1"/>
</dbReference>
<dbReference type="Gene3D" id="3.40.640.10">
    <property type="entry name" value="Type I PLP-dependent aspartate aminotransferase-like (Major domain)"/>
    <property type="match status" value="1"/>
</dbReference>
<dbReference type="HAMAP" id="MF_01276">
    <property type="entry name" value="Putres_aminotrans_3"/>
    <property type="match status" value="1"/>
</dbReference>
<dbReference type="InterPro" id="IPR005814">
    <property type="entry name" value="Aminotrans_3"/>
</dbReference>
<dbReference type="InterPro" id="IPR049704">
    <property type="entry name" value="Aminotrans_3_PPA_site"/>
</dbReference>
<dbReference type="InterPro" id="IPR050103">
    <property type="entry name" value="Class-III_PLP-dep_AT"/>
</dbReference>
<dbReference type="InterPro" id="IPR017747">
    <property type="entry name" value="Putrescine_aminotransferase"/>
</dbReference>
<dbReference type="InterPro" id="IPR015424">
    <property type="entry name" value="PyrdxlP-dep_Trfase"/>
</dbReference>
<dbReference type="InterPro" id="IPR015421">
    <property type="entry name" value="PyrdxlP-dep_Trfase_major"/>
</dbReference>
<dbReference type="InterPro" id="IPR015422">
    <property type="entry name" value="PyrdxlP-dep_Trfase_small"/>
</dbReference>
<dbReference type="NCBIfam" id="NF008570">
    <property type="entry name" value="PRK11522.1"/>
    <property type="match status" value="1"/>
</dbReference>
<dbReference type="NCBIfam" id="TIGR03372">
    <property type="entry name" value="putres_am_tran"/>
    <property type="match status" value="1"/>
</dbReference>
<dbReference type="PANTHER" id="PTHR11986">
    <property type="entry name" value="AMINOTRANSFERASE CLASS III"/>
    <property type="match status" value="1"/>
</dbReference>
<dbReference type="PANTHER" id="PTHR11986:SF112">
    <property type="entry name" value="PUTRESCINE AMINOTRANSFERASE"/>
    <property type="match status" value="1"/>
</dbReference>
<dbReference type="Pfam" id="PF00202">
    <property type="entry name" value="Aminotran_3"/>
    <property type="match status" value="1"/>
</dbReference>
<dbReference type="PIRSF" id="PIRSF000521">
    <property type="entry name" value="Transaminase_4ab_Lys_Orn"/>
    <property type="match status" value="1"/>
</dbReference>
<dbReference type="SUPFAM" id="SSF53383">
    <property type="entry name" value="PLP-dependent transferases"/>
    <property type="match status" value="1"/>
</dbReference>
<dbReference type="PROSITE" id="PS00600">
    <property type="entry name" value="AA_TRANSFER_CLASS_3"/>
    <property type="match status" value="1"/>
</dbReference>
<reference key="1">
    <citation type="journal article" date="2004" name="Proc. Natl. Acad. Sci. U.S.A.">
        <title>Genome sequence of the enterobacterial phytopathogen Erwinia carotovora subsp. atroseptica and characterization of virulence factors.</title>
        <authorList>
            <person name="Bell K.S."/>
            <person name="Sebaihia M."/>
            <person name="Pritchard L."/>
            <person name="Holden M.T.G."/>
            <person name="Hyman L.J."/>
            <person name="Holeva M.C."/>
            <person name="Thomson N.R."/>
            <person name="Bentley S.D."/>
            <person name="Churcher L.J.C."/>
            <person name="Mungall K."/>
            <person name="Atkin R."/>
            <person name="Bason N."/>
            <person name="Brooks K."/>
            <person name="Chillingworth T."/>
            <person name="Clark K."/>
            <person name="Doggett J."/>
            <person name="Fraser A."/>
            <person name="Hance Z."/>
            <person name="Hauser H."/>
            <person name="Jagels K."/>
            <person name="Moule S."/>
            <person name="Norbertczak H."/>
            <person name="Ormond D."/>
            <person name="Price C."/>
            <person name="Quail M.A."/>
            <person name="Sanders M."/>
            <person name="Walker D."/>
            <person name="Whitehead S."/>
            <person name="Salmond G.P.C."/>
            <person name="Birch P.R.J."/>
            <person name="Parkhill J."/>
            <person name="Toth I.K."/>
        </authorList>
    </citation>
    <scope>NUCLEOTIDE SEQUENCE [LARGE SCALE GENOMIC DNA]</scope>
    <source>
        <strain>SCRI 1043 / ATCC BAA-672</strain>
    </source>
</reference>
<evidence type="ECO:0000255" key="1">
    <source>
        <dbReference type="HAMAP-Rule" id="MF_01276"/>
    </source>
</evidence>
<accession>Q6D6Y6</accession>
<comment type="function">
    <text evidence="1">Catalyzes the aminotransferase reaction from putrescine to 2-oxoglutarate, leading to glutamate and 4-aminobutanal, which spontaneously cyclizes to form 1-pyrroline. This is the first step in one of two pathways for putrescine degradation, where putrescine is converted into 4-aminobutanoate (gamma-aminobutyrate or GABA) via 4-aminobutanal. Also functions as a cadaverine transaminase in a a L-lysine degradation pathway to succinate that proceeds via cadaverine, glutarate and L-2-hydroxyglutarate.</text>
</comment>
<comment type="catalytic activity">
    <reaction evidence="1">
        <text>an alkane-alpha,omega-diamine + 2-oxoglutarate = an omega-aminoaldehyde + L-glutamate</text>
        <dbReference type="Rhea" id="RHEA:18217"/>
        <dbReference type="Rhea" id="RHEA-COMP:9766"/>
        <dbReference type="Rhea" id="RHEA-COMP:12750"/>
        <dbReference type="ChEBI" id="CHEBI:16810"/>
        <dbReference type="ChEBI" id="CHEBI:29985"/>
        <dbReference type="ChEBI" id="CHEBI:70977"/>
        <dbReference type="ChEBI" id="CHEBI:133427"/>
        <dbReference type="EC" id="2.6.1.29"/>
    </reaction>
    <physiologicalReaction direction="left-to-right" evidence="1">
        <dbReference type="Rhea" id="RHEA:18218"/>
    </physiologicalReaction>
</comment>
<comment type="catalytic activity">
    <reaction evidence="1">
        <text>putrescine + 2-oxoglutarate = 1-pyrroline + L-glutamate + H2O</text>
        <dbReference type="Rhea" id="RHEA:12268"/>
        <dbReference type="ChEBI" id="CHEBI:15377"/>
        <dbReference type="ChEBI" id="CHEBI:16810"/>
        <dbReference type="ChEBI" id="CHEBI:29985"/>
        <dbReference type="ChEBI" id="CHEBI:36781"/>
        <dbReference type="ChEBI" id="CHEBI:326268"/>
        <dbReference type="EC" id="2.6.1.82"/>
    </reaction>
    <physiologicalReaction direction="left-to-right" evidence="1">
        <dbReference type="Rhea" id="RHEA:12269"/>
    </physiologicalReaction>
</comment>
<comment type="catalytic activity">
    <reaction evidence="1">
        <text>cadaverine + 2-oxoglutarate = 5-aminopentanal + L-glutamate</text>
        <dbReference type="Rhea" id="RHEA:61624"/>
        <dbReference type="ChEBI" id="CHEBI:16810"/>
        <dbReference type="ChEBI" id="CHEBI:29985"/>
        <dbReference type="ChEBI" id="CHEBI:58384"/>
        <dbReference type="ChEBI" id="CHEBI:144896"/>
    </reaction>
    <physiologicalReaction direction="left-to-right" evidence="1">
        <dbReference type="Rhea" id="RHEA:61625"/>
    </physiologicalReaction>
</comment>
<comment type="cofactor">
    <cofactor evidence="1">
        <name>pyridoxal 5'-phosphate</name>
        <dbReference type="ChEBI" id="CHEBI:597326"/>
    </cofactor>
</comment>
<comment type="pathway">
    <text evidence="1">Amine and polyamine degradation; putrescine degradation; 4-aminobutanal from putrescine (transaminase route): step 1/1.</text>
</comment>
<comment type="similarity">
    <text evidence="1">Belongs to the class-III pyridoxal-phosphate-dependent aminotransferase family. Putrescine aminotransferase subfamily.</text>
</comment>
<organism>
    <name type="scientific">Pectobacterium atrosepticum (strain SCRI 1043 / ATCC BAA-672)</name>
    <name type="common">Erwinia carotovora subsp. atroseptica</name>
    <dbReference type="NCBI Taxonomy" id="218491"/>
    <lineage>
        <taxon>Bacteria</taxon>
        <taxon>Pseudomonadati</taxon>
        <taxon>Pseudomonadota</taxon>
        <taxon>Gammaproteobacteria</taxon>
        <taxon>Enterobacterales</taxon>
        <taxon>Pectobacteriaceae</taxon>
        <taxon>Pectobacterium</taxon>
    </lineage>
</organism>
<name>PAT_PECAS</name>
<feature type="chain" id="PRO_0000269732" description="Putrescine aminotransferase">
    <location>
        <begin position="1"/>
        <end position="468"/>
    </location>
</feature>
<feature type="binding site" description="in other chain" evidence="1">
    <location>
        <begin position="150"/>
        <end position="151"/>
    </location>
    <ligand>
        <name>pyridoxal 5'-phosphate</name>
        <dbReference type="ChEBI" id="CHEBI:597326"/>
        <note>ligand shared between dimeric partners</note>
    </ligand>
</feature>
<feature type="binding site" description="in other chain" evidence="1">
    <location>
        <position position="274"/>
    </location>
    <ligand>
        <name>pyridoxal 5'-phosphate</name>
        <dbReference type="ChEBI" id="CHEBI:597326"/>
        <note>ligand shared between dimeric partners</note>
    </ligand>
</feature>
<feature type="binding site" evidence="1">
    <location>
        <position position="332"/>
    </location>
    <ligand>
        <name>pyridoxal 5'-phosphate</name>
        <dbReference type="ChEBI" id="CHEBI:597326"/>
        <note>ligand shared between dimeric partners</note>
    </ligand>
</feature>
<feature type="modified residue" description="N6-(pyridoxal phosphate)lysine" evidence="1">
    <location>
        <position position="300"/>
    </location>
</feature>